<comment type="function">
    <text evidence="1 6">Palmitoyltransferase that could catalyze the addition of palmitate onto various protein substrates and be involved in a variety of cellular processes (PubMed:22399288). Catalyzes the palmitoylation of KCNMA1, regulating localization of KCNMA1 to the plasma membrane (PubMed:22399288). Might also mediate palmitoylation of CNN3 (By similarity).</text>
</comment>
<comment type="catalytic activity">
    <reaction evidence="6">
        <text>L-cysteinyl-[protein] + hexadecanoyl-CoA = S-hexadecanoyl-L-cysteinyl-[protein] + CoA</text>
        <dbReference type="Rhea" id="RHEA:36683"/>
        <dbReference type="Rhea" id="RHEA-COMP:10131"/>
        <dbReference type="Rhea" id="RHEA-COMP:11032"/>
        <dbReference type="ChEBI" id="CHEBI:29950"/>
        <dbReference type="ChEBI" id="CHEBI:57287"/>
        <dbReference type="ChEBI" id="CHEBI:57379"/>
        <dbReference type="ChEBI" id="CHEBI:74151"/>
        <dbReference type="EC" id="2.3.1.225"/>
    </reaction>
    <physiologicalReaction direction="left-to-right" evidence="8">
        <dbReference type="Rhea" id="RHEA:36684"/>
    </physiologicalReaction>
</comment>
<comment type="subunit">
    <text evidence="1">Interacts with CNN3.</text>
</comment>
<comment type="interaction">
    <interactant intactId="EBI-10268111">
        <id>Q8N966</id>
    </interactant>
    <interactant intactId="EBI-7797864">
        <id>P11912</id>
        <label>CD79A</label>
    </interactant>
    <organismsDiffer>false</organismsDiffer>
    <experiments>3</experiments>
</comment>
<comment type="interaction">
    <interactant intactId="EBI-10268111">
        <id>Q8N966</id>
    </interactant>
    <interactant intactId="EBI-12703404">
        <id>Q8WXI8</id>
        <label>CLEC4D</label>
    </interactant>
    <organismsDiffer>false</organismsDiffer>
    <experiments>3</experiments>
</comment>
<comment type="interaction">
    <interactant intactId="EBI-10268111">
        <id>Q8N966</id>
    </interactant>
    <interactant intactId="EBI-11291074">
        <id>Q9BQT9</id>
        <label>CLSTN3</label>
    </interactant>
    <organismsDiffer>false</organismsDiffer>
    <experiments>3</experiments>
</comment>
<comment type="interaction">
    <interactant intactId="EBI-10268111">
        <id>Q8N966</id>
    </interactant>
    <interactant intactId="EBI-6942903">
        <id>Q96BA8</id>
        <label>CREB3L1</label>
    </interactant>
    <organismsDiffer>false</organismsDiffer>
    <experiments>3</experiments>
</comment>
<comment type="interaction">
    <interactant intactId="EBI-10268111">
        <id>Q8N966</id>
    </interactant>
    <interactant intactId="EBI-17263163">
        <id>Q96LA5-2</id>
        <label>FCRL2</label>
    </interactant>
    <organismsDiffer>false</organismsDiffer>
    <experiments>3</experiments>
</comment>
<comment type="interaction">
    <interactant intactId="EBI-10268111">
        <id>Q8N966</id>
    </interactant>
    <interactant intactId="EBI-12142257">
        <id>Q8TBE3</id>
        <label>FNDC9</label>
    </interactant>
    <organismsDiffer>false</organismsDiffer>
    <experiments>3</experiments>
</comment>
<comment type="interaction">
    <interactant intactId="EBI-10268111">
        <id>Q8N966</id>
    </interactant>
    <interactant intactId="EBI-11721746">
        <id>Q8TED1</id>
        <label>GPX8</label>
    </interactant>
    <organismsDiffer>false</organismsDiffer>
    <experiments>3</experiments>
</comment>
<comment type="interaction">
    <interactant intactId="EBI-10268111">
        <id>Q8N966</id>
    </interactant>
    <interactant intactId="EBI-13302279">
        <id>O15165-2</id>
        <label>LDLRAD4</label>
    </interactant>
    <organismsDiffer>false</organismsDiffer>
    <experiments>3</experiments>
</comment>
<comment type="interaction">
    <interactant intactId="EBI-10268111">
        <id>Q8N966</id>
    </interactant>
    <interactant intactId="EBI-3919694">
        <id>P15151</id>
        <label>PVR</label>
    </interactant>
    <organismsDiffer>false</organismsDiffer>
    <experiments>3</experiments>
</comment>
<comment type="interaction">
    <interactant intactId="EBI-10268111">
        <id>Q8N966</id>
    </interactant>
    <interactant intactId="EBI-1052363">
        <id>Q9NS64</id>
        <label>RPRM</label>
    </interactant>
    <organismsDiffer>false</organismsDiffer>
    <experiments>3</experiments>
</comment>
<comment type="interaction">
    <interactant intactId="EBI-10268111">
        <id>Q8N966</id>
    </interactant>
    <interactant intactId="EBI-8638294">
        <id>Q9NUH8</id>
        <label>TMEM14B</label>
    </interactant>
    <organismsDiffer>false</organismsDiffer>
    <experiments>3</experiments>
</comment>
<comment type="interaction">
    <interactant intactId="EBI-10268111">
        <id>Q8N966</id>
    </interactant>
    <interactant intactId="EBI-2548832">
        <id>Q8N661</id>
        <label>TMEM86B</label>
    </interactant>
    <organismsDiffer>false</organismsDiffer>
    <experiments>3</experiments>
</comment>
<comment type="interaction">
    <interactant intactId="EBI-10268111">
        <id>Q8N966</id>
    </interactant>
    <interactant intactId="EBI-17198826">
        <id>Q6PEY1</id>
        <label>TMEM88</label>
    </interactant>
    <organismsDiffer>false</organismsDiffer>
    <experiments>3</experiments>
</comment>
<comment type="interaction">
    <interactant intactId="EBI-10268111">
        <id>Q8N966</id>
    </interactant>
    <interactant intactId="EBI-10262539">
        <id>Q8IWR1</id>
        <label>TRIM59</label>
    </interactant>
    <organismsDiffer>false</organismsDiffer>
    <experiments>8</experiments>
</comment>
<comment type="subcellular location">
    <subcellularLocation>
        <location evidence="5">Endoplasmic reticulum membrane</location>
        <topology evidence="3">Multi-pass membrane protein</topology>
    </subcellularLocation>
    <subcellularLocation>
        <location evidence="5">Golgi apparatus membrane</location>
        <topology evidence="3">Multi-pass membrane protein</topology>
    </subcellularLocation>
</comment>
<comment type="tissue specificity">
    <text evidence="5">Widely expressed.</text>
</comment>
<comment type="domain">
    <text evidence="2">The DHHC domain is required for palmitoyltransferase activity.</text>
</comment>
<comment type="similarity">
    <text evidence="7">Belongs to the DHHC palmitoyltransferase family.</text>
</comment>
<sequence>MLALRLLNVVAPAYFLCISLVTFVLQLFLFLPSMREDPAAARLFSPALLHGALFLFLSANALGNYVLVIQNSPDDLGACQGASARKTPCPSPSTHFCRVCARVTLRHDHHCFFTGNCIGSRNMRNFVLFCLYTSLACLYSMVAGVAYISAVLSISFAHPLAFLTLLPTSISQFFSGAVLGSEMFVILMLYLWFAIGLACAGFCCHQLLLILRGQTRHQVRKGVAVRARPWRKNLQEVFGKRWLLGLLVPMFNVGSESSKQQDK</sequence>
<dbReference type="EC" id="2.3.1.225" evidence="6"/>
<dbReference type="EMBL" id="AK095612">
    <property type="protein sequence ID" value="BAC04590.1"/>
    <property type="molecule type" value="mRNA"/>
</dbReference>
<dbReference type="EMBL" id="AK294840">
    <property type="protein sequence ID" value="BAH11901.1"/>
    <property type="molecule type" value="mRNA"/>
</dbReference>
<dbReference type="EMBL" id="AC007375">
    <property type="status" value="NOT_ANNOTATED_CDS"/>
    <property type="molecule type" value="Genomic_DNA"/>
</dbReference>
<dbReference type="EMBL" id="BC117676">
    <property type="protein sequence ID" value="AAI17677.1"/>
    <property type="molecule type" value="mRNA"/>
</dbReference>
<dbReference type="CCDS" id="CCDS45140.1"/>
<dbReference type="RefSeq" id="NP_001351101.1">
    <property type="nucleotide sequence ID" value="NM_001364172.1"/>
</dbReference>
<dbReference type="RefSeq" id="NP_777636.2">
    <property type="nucleotide sequence ID" value="NM_174976.2"/>
</dbReference>
<dbReference type="RefSeq" id="XP_006720182.1">
    <property type="nucleotide sequence ID" value="XM_006720119.3"/>
</dbReference>
<dbReference type="RefSeq" id="XP_011534963.1">
    <property type="nucleotide sequence ID" value="XM_011536661.3"/>
</dbReference>
<dbReference type="RefSeq" id="XP_054231858.1">
    <property type="nucleotide sequence ID" value="XM_054375883.1"/>
</dbReference>
<dbReference type="BioGRID" id="129607">
    <property type="interactions" value="19"/>
</dbReference>
<dbReference type="FunCoup" id="Q8N966">
    <property type="interactions" value="411"/>
</dbReference>
<dbReference type="IntAct" id="Q8N966">
    <property type="interactions" value="17"/>
</dbReference>
<dbReference type="STRING" id="9606.ENSP00000318222"/>
<dbReference type="BioMuta" id="ZDHHC22"/>
<dbReference type="DMDM" id="126302620"/>
<dbReference type="jPOST" id="Q8N966"/>
<dbReference type="MassIVE" id="Q8N966"/>
<dbReference type="PaxDb" id="9606-ENSP00000318222"/>
<dbReference type="PeptideAtlas" id="Q8N966"/>
<dbReference type="ProteomicsDB" id="72495"/>
<dbReference type="Antibodypedia" id="70659">
    <property type="antibodies" value="25 antibodies from 13 providers"/>
</dbReference>
<dbReference type="DNASU" id="283576"/>
<dbReference type="Ensembl" id="ENST00000319374.4">
    <property type="protein sequence ID" value="ENSP00000318222.4"/>
    <property type="gene ID" value="ENSG00000177108.5"/>
</dbReference>
<dbReference type="GeneID" id="283576"/>
<dbReference type="KEGG" id="hsa:283576"/>
<dbReference type="MANE-Select" id="ENST00000319374.4">
    <property type="protein sequence ID" value="ENSP00000318222.4"/>
    <property type="RefSeq nucleotide sequence ID" value="NM_174976.2"/>
    <property type="RefSeq protein sequence ID" value="NP_777636.2"/>
</dbReference>
<dbReference type="UCSC" id="uc010asp.3">
    <property type="organism name" value="human"/>
</dbReference>
<dbReference type="AGR" id="HGNC:20106"/>
<dbReference type="CTD" id="283576"/>
<dbReference type="DisGeNET" id="283576"/>
<dbReference type="GeneCards" id="ZDHHC22"/>
<dbReference type="HGNC" id="HGNC:20106">
    <property type="gene designation" value="ZDHHC22"/>
</dbReference>
<dbReference type="HPA" id="ENSG00000177108">
    <property type="expression patterns" value="Tissue enriched (brain)"/>
</dbReference>
<dbReference type="neXtProt" id="NX_Q8N966"/>
<dbReference type="OpenTargets" id="ENSG00000177108"/>
<dbReference type="PharmGKB" id="PA134952477"/>
<dbReference type="VEuPathDB" id="HostDB:ENSG00000177108"/>
<dbReference type="eggNOG" id="KOG1311">
    <property type="taxonomic scope" value="Eukaryota"/>
</dbReference>
<dbReference type="GeneTree" id="ENSGT00730000111268"/>
<dbReference type="HOGENOM" id="CLU_027721_5_3_1"/>
<dbReference type="InParanoid" id="Q8N966"/>
<dbReference type="OMA" id="GQTWCQL"/>
<dbReference type="OrthoDB" id="302728at2759"/>
<dbReference type="PAN-GO" id="Q8N966">
    <property type="GO annotations" value="5 GO annotations based on evolutionary models"/>
</dbReference>
<dbReference type="PhylomeDB" id="Q8N966"/>
<dbReference type="TreeFam" id="TF342115"/>
<dbReference type="PathwayCommons" id="Q8N966"/>
<dbReference type="SignaLink" id="Q8N966"/>
<dbReference type="BioGRID-ORCS" id="283576">
    <property type="hits" value="22 hits in 1144 CRISPR screens"/>
</dbReference>
<dbReference type="ChiTaRS" id="ZDHHC22">
    <property type="organism name" value="human"/>
</dbReference>
<dbReference type="GenomeRNAi" id="283576"/>
<dbReference type="Pharos" id="Q8N966">
    <property type="development level" value="Tdark"/>
</dbReference>
<dbReference type="PRO" id="PR:Q8N966"/>
<dbReference type="Proteomes" id="UP000005640">
    <property type="component" value="Chromosome 14"/>
</dbReference>
<dbReference type="RNAct" id="Q8N966">
    <property type="molecule type" value="protein"/>
</dbReference>
<dbReference type="Bgee" id="ENSG00000177108">
    <property type="expression patterns" value="Expressed in lateral nuclear group of thalamus and 90 other cell types or tissues"/>
</dbReference>
<dbReference type="ExpressionAtlas" id="Q8N966">
    <property type="expression patterns" value="baseline and differential"/>
</dbReference>
<dbReference type="GO" id="GO:0005783">
    <property type="term" value="C:endoplasmic reticulum"/>
    <property type="evidence" value="ECO:0000314"/>
    <property type="project" value="UniProtKB"/>
</dbReference>
<dbReference type="GO" id="GO:0005789">
    <property type="term" value="C:endoplasmic reticulum membrane"/>
    <property type="evidence" value="ECO:0007669"/>
    <property type="project" value="UniProtKB-SubCell"/>
</dbReference>
<dbReference type="GO" id="GO:0005794">
    <property type="term" value="C:Golgi apparatus"/>
    <property type="evidence" value="ECO:0000314"/>
    <property type="project" value="UniProtKB"/>
</dbReference>
<dbReference type="GO" id="GO:0000139">
    <property type="term" value="C:Golgi membrane"/>
    <property type="evidence" value="ECO:0007669"/>
    <property type="project" value="UniProtKB-SubCell"/>
</dbReference>
<dbReference type="GO" id="GO:0005886">
    <property type="term" value="C:plasma membrane"/>
    <property type="evidence" value="ECO:0000314"/>
    <property type="project" value="HPA"/>
</dbReference>
<dbReference type="GO" id="GO:0019706">
    <property type="term" value="F:protein-cysteine S-palmitoyltransferase activity"/>
    <property type="evidence" value="ECO:0000318"/>
    <property type="project" value="GO_Central"/>
</dbReference>
<dbReference type="GO" id="GO:0072659">
    <property type="term" value="P:protein localization to plasma membrane"/>
    <property type="evidence" value="ECO:0000315"/>
    <property type="project" value="UniProtKB"/>
</dbReference>
<dbReference type="GO" id="GO:0018345">
    <property type="term" value="P:protein palmitoylation"/>
    <property type="evidence" value="ECO:0000315"/>
    <property type="project" value="UniProtKB"/>
</dbReference>
<dbReference type="GO" id="GO:0006612">
    <property type="term" value="P:protein targeting to membrane"/>
    <property type="evidence" value="ECO:0000318"/>
    <property type="project" value="GO_Central"/>
</dbReference>
<dbReference type="InterPro" id="IPR001594">
    <property type="entry name" value="Palmitoyltrfase_DHHC"/>
</dbReference>
<dbReference type="InterPro" id="IPR039859">
    <property type="entry name" value="PFA4/ZDH16/20/ERF2-like"/>
</dbReference>
<dbReference type="InterPro" id="IPR000731">
    <property type="entry name" value="SSD"/>
</dbReference>
<dbReference type="PANTHER" id="PTHR12246">
    <property type="entry name" value="PALMITOYLTRANSFERASE ZDHHC16"/>
    <property type="match status" value="1"/>
</dbReference>
<dbReference type="Pfam" id="PF01529">
    <property type="entry name" value="DHHC"/>
    <property type="match status" value="1"/>
</dbReference>
<dbReference type="PROSITE" id="PS50216">
    <property type="entry name" value="DHHC"/>
    <property type="match status" value="1"/>
</dbReference>
<dbReference type="PROSITE" id="PS50156">
    <property type="entry name" value="SSD"/>
    <property type="match status" value="1"/>
</dbReference>
<evidence type="ECO:0000250" key="1">
    <source>
        <dbReference type="UniProtKB" id="A0PK84"/>
    </source>
</evidence>
<evidence type="ECO:0000250" key="2">
    <source>
        <dbReference type="UniProtKB" id="Q8IUH5"/>
    </source>
</evidence>
<evidence type="ECO:0000255" key="3"/>
<evidence type="ECO:0000255" key="4">
    <source>
        <dbReference type="PROSITE-ProRule" id="PRU00067"/>
    </source>
</evidence>
<evidence type="ECO:0000269" key="5">
    <source>
    </source>
</evidence>
<evidence type="ECO:0000269" key="6">
    <source>
    </source>
</evidence>
<evidence type="ECO:0000305" key="7"/>
<evidence type="ECO:0000305" key="8">
    <source>
    </source>
</evidence>
<evidence type="ECO:0000312" key="9">
    <source>
        <dbReference type="HGNC" id="HGNC:20106"/>
    </source>
</evidence>
<protein>
    <recommendedName>
        <fullName evidence="8">Palmitoyltransferase ZDHHC22</fullName>
        <ecNumber evidence="6">2.3.1.225</ecNumber>
    </recommendedName>
    <alternativeName>
        <fullName evidence="9">Zinc finger DHHC domain-containing protein 22</fullName>
        <shortName>DHHC-22</shortName>
        <shortName>zDHHC22</shortName>
    </alternativeName>
</protein>
<gene>
    <name evidence="9" type="primary">ZDHHC22</name>
    <name type="synonym">C14orf59</name>
</gene>
<organism>
    <name type="scientific">Homo sapiens</name>
    <name type="common">Human</name>
    <dbReference type="NCBI Taxonomy" id="9606"/>
    <lineage>
        <taxon>Eukaryota</taxon>
        <taxon>Metazoa</taxon>
        <taxon>Chordata</taxon>
        <taxon>Craniata</taxon>
        <taxon>Vertebrata</taxon>
        <taxon>Euteleostomi</taxon>
        <taxon>Mammalia</taxon>
        <taxon>Eutheria</taxon>
        <taxon>Euarchontoglires</taxon>
        <taxon>Primates</taxon>
        <taxon>Haplorrhini</taxon>
        <taxon>Catarrhini</taxon>
        <taxon>Hominidae</taxon>
        <taxon>Homo</taxon>
    </lineage>
</organism>
<proteinExistence type="evidence at protein level"/>
<keyword id="KW-0012">Acyltransferase</keyword>
<keyword id="KW-0256">Endoplasmic reticulum</keyword>
<keyword id="KW-0333">Golgi apparatus</keyword>
<keyword id="KW-0449">Lipoprotein</keyword>
<keyword id="KW-0472">Membrane</keyword>
<keyword id="KW-0564">Palmitate</keyword>
<keyword id="KW-1267">Proteomics identification</keyword>
<keyword id="KW-1185">Reference proteome</keyword>
<keyword id="KW-0808">Transferase</keyword>
<keyword id="KW-0812">Transmembrane</keyword>
<keyword id="KW-1133">Transmembrane helix</keyword>
<name>ZDH22_HUMAN</name>
<reference key="1">
    <citation type="journal article" date="2004" name="Nat. Genet.">
        <title>Complete sequencing and characterization of 21,243 full-length human cDNAs.</title>
        <authorList>
            <person name="Ota T."/>
            <person name="Suzuki Y."/>
            <person name="Nishikawa T."/>
            <person name="Otsuki T."/>
            <person name="Sugiyama T."/>
            <person name="Irie R."/>
            <person name="Wakamatsu A."/>
            <person name="Hayashi K."/>
            <person name="Sato H."/>
            <person name="Nagai K."/>
            <person name="Kimura K."/>
            <person name="Makita H."/>
            <person name="Sekine M."/>
            <person name="Obayashi M."/>
            <person name="Nishi T."/>
            <person name="Shibahara T."/>
            <person name="Tanaka T."/>
            <person name="Ishii S."/>
            <person name="Yamamoto J."/>
            <person name="Saito K."/>
            <person name="Kawai Y."/>
            <person name="Isono Y."/>
            <person name="Nakamura Y."/>
            <person name="Nagahari K."/>
            <person name="Murakami K."/>
            <person name="Yasuda T."/>
            <person name="Iwayanagi T."/>
            <person name="Wagatsuma M."/>
            <person name="Shiratori A."/>
            <person name="Sudo H."/>
            <person name="Hosoiri T."/>
            <person name="Kaku Y."/>
            <person name="Kodaira H."/>
            <person name="Kondo H."/>
            <person name="Sugawara M."/>
            <person name="Takahashi M."/>
            <person name="Kanda K."/>
            <person name="Yokoi T."/>
            <person name="Furuya T."/>
            <person name="Kikkawa E."/>
            <person name="Omura Y."/>
            <person name="Abe K."/>
            <person name="Kamihara K."/>
            <person name="Katsuta N."/>
            <person name="Sato K."/>
            <person name="Tanikawa M."/>
            <person name="Yamazaki M."/>
            <person name="Ninomiya K."/>
            <person name="Ishibashi T."/>
            <person name="Yamashita H."/>
            <person name="Murakawa K."/>
            <person name="Fujimori K."/>
            <person name="Tanai H."/>
            <person name="Kimata M."/>
            <person name="Watanabe M."/>
            <person name="Hiraoka S."/>
            <person name="Chiba Y."/>
            <person name="Ishida S."/>
            <person name="Ono Y."/>
            <person name="Takiguchi S."/>
            <person name="Watanabe S."/>
            <person name="Yosida M."/>
            <person name="Hotuta T."/>
            <person name="Kusano J."/>
            <person name="Kanehori K."/>
            <person name="Takahashi-Fujii A."/>
            <person name="Hara H."/>
            <person name="Tanase T.-O."/>
            <person name="Nomura Y."/>
            <person name="Togiya S."/>
            <person name="Komai F."/>
            <person name="Hara R."/>
            <person name="Takeuchi K."/>
            <person name="Arita M."/>
            <person name="Imose N."/>
            <person name="Musashino K."/>
            <person name="Yuuki H."/>
            <person name="Oshima A."/>
            <person name="Sasaki N."/>
            <person name="Aotsuka S."/>
            <person name="Yoshikawa Y."/>
            <person name="Matsunawa H."/>
            <person name="Ichihara T."/>
            <person name="Shiohata N."/>
            <person name="Sano S."/>
            <person name="Moriya S."/>
            <person name="Momiyama H."/>
            <person name="Satoh N."/>
            <person name="Takami S."/>
            <person name="Terashima Y."/>
            <person name="Suzuki O."/>
            <person name="Nakagawa S."/>
            <person name="Senoh A."/>
            <person name="Mizoguchi H."/>
            <person name="Goto Y."/>
            <person name="Shimizu F."/>
            <person name="Wakebe H."/>
            <person name="Hishigaki H."/>
            <person name="Watanabe T."/>
            <person name="Sugiyama A."/>
            <person name="Takemoto M."/>
            <person name="Kawakami B."/>
            <person name="Yamazaki M."/>
            <person name="Watanabe K."/>
            <person name="Kumagai A."/>
            <person name="Itakura S."/>
            <person name="Fukuzumi Y."/>
            <person name="Fujimori Y."/>
            <person name="Komiyama M."/>
            <person name="Tashiro H."/>
            <person name="Tanigami A."/>
            <person name="Fujiwara T."/>
            <person name="Ono T."/>
            <person name="Yamada K."/>
            <person name="Fujii Y."/>
            <person name="Ozaki K."/>
            <person name="Hirao M."/>
            <person name="Ohmori Y."/>
            <person name="Kawabata A."/>
            <person name="Hikiji T."/>
            <person name="Kobatake N."/>
            <person name="Inagaki H."/>
            <person name="Ikema Y."/>
            <person name="Okamoto S."/>
            <person name="Okitani R."/>
            <person name="Kawakami T."/>
            <person name="Noguchi S."/>
            <person name="Itoh T."/>
            <person name="Shigeta K."/>
            <person name="Senba T."/>
            <person name="Matsumura K."/>
            <person name="Nakajima Y."/>
            <person name="Mizuno T."/>
            <person name="Morinaga M."/>
            <person name="Sasaki M."/>
            <person name="Togashi T."/>
            <person name="Oyama M."/>
            <person name="Hata H."/>
            <person name="Watanabe M."/>
            <person name="Komatsu T."/>
            <person name="Mizushima-Sugano J."/>
            <person name="Satoh T."/>
            <person name="Shirai Y."/>
            <person name="Takahashi Y."/>
            <person name="Nakagawa K."/>
            <person name="Okumura K."/>
            <person name="Nagase T."/>
            <person name="Nomura N."/>
            <person name="Kikuchi H."/>
            <person name="Masuho Y."/>
            <person name="Yamashita R."/>
            <person name="Nakai K."/>
            <person name="Yada T."/>
            <person name="Nakamura Y."/>
            <person name="Ohara O."/>
            <person name="Isogai T."/>
            <person name="Sugano S."/>
        </authorList>
    </citation>
    <scope>NUCLEOTIDE SEQUENCE [LARGE SCALE MRNA]</scope>
    <source>
        <tissue>Brain</tissue>
    </source>
</reference>
<reference key="2">
    <citation type="journal article" date="2003" name="Nature">
        <title>The DNA sequence and analysis of human chromosome 14.</title>
        <authorList>
            <person name="Heilig R."/>
            <person name="Eckenberg R."/>
            <person name="Petit J.-L."/>
            <person name="Fonknechten N."/>
            <person name="Da Silva C."/>
            <person name="Cattolico L."/>
            <person name="Levy M."/>
            <person name="Barbe V."/>
            <person name="De Berardinis V."/>
            <person name="Ureta-Vidal A."/>
            <person name="Pelletier E."/>
            <person name="Vico V."/>
            <person name="Anthouard V."/>
            <person name="Rowen L."/>
            <person name="Madan A."/>
            <person name="Qin S."/>
            <person name="Sun H."/>
            <person name="Du H."/>
            <person name="Pepin K."/>
            <person name="Artiguenave F."/>
            <person name="Robert C."/>
            <person name="Cruaud C."/>
            <person name="Bruels T."/>
            <person name="Jaillon O."/>
            <person name="Friedlander L."/>
            <person name="Samson G."/>
            <person name="Brottier P."/>
            <person name="Cure S."/>
            <person name="Segurens B."/>
            <person name="Aniere F."/>
            <person name="Samain S."/>
            <person name="Crespeau H."/>
            <person name="Abbasi N."/>
            <person name="Aiach N."/>
            <person name="Boscus D."/>
            <person name="Dickhoff R."/>
            <person name="Dors M."/>
            <person name="Dubois I."/>
            <person name="Friedman C."/>
            <person name="Gouyvenoux M."/>
            <person name="James R."/>
            <person name="Madan A."/>
            <person name="Mairey-Estrada B."/>
            <person name="Mangenot S."/>
            <person name="Martins N."/>
            <person name="Menard M."/>
            <person name="Oztas S."/>
            <person name="Ratcliffe A."/>
            <person name="Shaffer T."/>
            <person name="Trask B."/>
            <person name="Vacherie B."/>
            <person name="Bellemere C."/>
            <person name="Belser C."/>
            <person name="Besnard-Gonnet M."/>
            <person name="Bartol-Mavel D."/>
            <person name="Boutard M."/>
            <person name="Briez-Silla S."/>
            <person name="Combette S."/>
            <person name="Dufosse-Laurent V."/>
            <person name="Ferron C."/>
            <person name="Lechaplais C."/>
            <person name="Louesse C."/>
            <person name="Muselet D."/>
            <person name="Magdelenat G."/>
            <person name="Pateau E."/>
            <person name="Petit E."/>
            <person name="Sirvain-Trukniewicz P."/>
            <person name="Trybou A."/>
            <person name="Vega-Czarny N."/>
            <person name="Bataille E."/>
            <person name="Bluet E."/>
            <person name="Bordelais I."/>
            <person name="Dubois M."/>
            <person name="Dumont C."/>
            <person name="Guerin T."/>
            <person name="Haffray S."/>
            <person name="Hammadi R."/>
            <person name="Muanga J."/>
            <person name="Pellouin V."/>
            <person name="Robert D."/>
            <person name="Wunderle E."/>
            <person name="Gauguet G."/>
            <person name="Roy A."/>
            <person name="Sainte-Marthe L."/>
            <person name="Verdier J."/>
            <person name="Verdier-Discala C."/>
            <person name="Hillier L.W."/>
            <person name="Fulton L."/>
            <person name="McPherson J."/>
            <person name="Matsuda F."/>
            <person name="Wilson R."/>
            <person name="Scarpelli C."/>
            <person name="Gyapay G."/>
            <person name="Wincker P."/>
            <person name="Saurin W."/>
            <person name="Quetier F."/>
            <person name="Waterston R."/>
            <person name="Hood L."/>
            <person name="Weissenbach J."/>
        </authorList>
    </citation>
    <scope>NUCLEOTIDE SEQUENCE [LARGE SCALE GENOMIC DNA]</scope>
</reference>
<reference key="3">
    <citation type="journal article" date="2004" name="Genome Res.">
        <title>The status, quality, and expansion of the NIH full-length cDNA project: the Mammalian Gene Collection (MGC).</title>
        <authorList>
            <consortium name="The MGC Project Team"/>
        </authorList>
    </citation>
    <scope>NUCLEOTIDE SEQUENCE [LARGE SCALE MRNA]</scope>
</reference>
<reference key="4">
    <citation type="journal article" date="2006" name="Biochim. Biophys. Acta">
        <title>Intracellular localization and tissue-specific distribution of human and yeast DHHC cysteine-rich domain-containing proteins.</title>
        <authorList>
            <person name="Ohno Y."/>
            <person name="Kihara A."/>
            <person name="Sano T."/>
            <person name="Igarashi Y."/>
        </authorList>
    </citation>
    <scope>SUBCELLULAR LOCATION</scope>
    <scope>TISSUE SPECIFICITY</scope>
</reference>
<reference key="5">
    <citation type="journal article" date="2012" name="J. Biol. Chem.">
        <title>Distinct acyl protein transferases and thioesterases control surface expression of calcium-activated potassium channels.</title>
        <authorList>
            <person name="Tian L."/>
            <person name="McClafferty H."/>
            <person name="Knaus H.G."/>
            <person name="Ruth P."/>
            <person name="Shipston M.J."/>
        </authorList>
    </citation>
    <scope>FUNCTION</scope>
    <scope>CATALYTIC ACTIVITY</scope>
</reference>
<accession>Q8N966</accession>
<accession>A6NH02</accession>
<accession>B7Z2L5</accession>
<accession>Q149P4</accession>
<feature type="chain" id="PRO_0000212911" description="Palmitoyltransferase ZDHHC22">
    <location>
        <begin position="1"/>
        <end position="263"/>
    </location>
</feature>
<feature type="topological domain" description="Cytoplasmic" evidence="7">
    <location>
        <begin position="1"/>
        <end position="9"/>
    </location>
</feature>
<feature type="transmembrane region" description="Helical" evidence="3">
    <location>
        <begin position="10"/>
        <end position="30"/>
    </location>
</feature>
<feature type="topological domain" description="Lumenal" evidence="7">
    <location>
        <begin position="31"/>
        <end position="48"/>
    </location>
</feature>
<feature type="transmembrane region" description="Helical" evidence="3">
    <location>
        <begin position="49"/>
        <end position="69"/>
    </location>
</feature>
<feature type="topological domain" description="Cytoplasmic" evidence="7">
    <location>
        <begin position="70"/>
        <end position="125"/>
    </location>
</feature>
<feature type="transmembrane region" description="Helical" evidence="3">
    <location>
        <begin position="126"/>
        <end position="146"/>
    </location>
</feature>
<feature type="transmembrane region" description="Helical" evidence="3">
    <location>
        <begin position="147"/>
        <end position="167"/>
    </location>
</feature>
<feature type="topological domain" description="Cytoplasmic" evidence="7">
    <location>
        <begin position="168"/>
        <end position="182"/>
    </location>
</feature>
<feature type="transmembrane region" description="Helical" evidence="3">
    <location>
        <begin position="183"/>
        <end position="203"/>
    </location>
</feature>
<feature type="topological domain" description="Lumenal" evidence="7">
    <location>
        <begin position="204"/>
        <end position="263"/>
    </location>
</feature>
<feature type="domain" description="DHHC" evidence="4">
    <location>
        <begin position="92"/>
        <end position="131"/>
    </location>
</feature>
<feature type="active site" description="S-palmitoyl cysteine intermediate" evidence="4">
    <location>
        <position position="111"/>
    </location>
</feature>
<feature type="sequence conflict" description="In Ref. 1; BAC04590." evidence="7" ref="1">
    <original>CLYSMVAGVAYISAVLSISFAHPL</original>
    <variation>QELTRGLRKEVAAGPAGPHVQCRK</variation>
    <location>
        <begin position="137"/>
        <end position="160"/>
    </location>
</feature>